<comment type="function">
    <text evidence="1">One of the proteins required for the normal export of preproteins out of the cell cytoplasm. It is a molecular chaperone that binds to a subset of precursor proteins, maintaining them in a translocation-competent state. It also specifically binds to its receptor SecA.</text>
</comment>
<comment type="subunit">
    <text evidence="1">Homotetramer, a dimer of dimers. One homotetramer interacts with 1 SecA dimer.</text>
</comment>
<comment type="subcellular location">
    <subcellularLocation>
        <location evidence="1">Cytoplasm</location>
    </subcellularLocation>
</comment>
<comment type="similarity">
    <text evidence="1">Belongs to the SecB family.</text>
</comment>
<gene>
    <name evidence="1" type="primary">secB</name>
    <name type="ordered locus">Rpal_0304</name>
</gene>
<name>SECB_RHOPT</name>
<sequence>MTNGNGTPPEGAPPQLNVLAQYTKDLSFENPNAPASLAPQQQQPAINIQINVGANNVGENEYEVTLSIEGKAESGSSVLFSFELAYAGVFRVLNVPQENLHPLIMIECPRLLFPFAREIIASAVRDGGFPPLMLDPVDFIGLYRQNLERAQQQGQPS</sequence>
<keyword id="KW-0143">Chaperone</keyword>
<keyword id="KW-0963">Cytoplasm</keyword>
<keyword id="KW-0653">Protein transport</keyword>
<keyword id="KW-0811">Translocation</keyword>
<keyword id="KW-0813">Transport</keyword>
<organism>
    <name type="scientific">Rhodopseudomonas palustris (strain TIE-1)</name>
    <dbReference type="NCBI Taxonomy" id="395960"/>
    <lineage>
        <taxon>Bacteria</taxon>
        <taxon>Pseudomonadati</taxon>
        <taxon>Pseudomonadota</taxon>
        <taxon>Alphaproteobacteria</taxon>
        <taxon>Hyphomicrobiales</taxon>
        <taxon>Nitrobacteraceae</taxon>
        <taxon>Rhodopseudomonas</taxon>
    </lineage>
</organism>
<feature type="chain" id="PRO_1000195337" description="Protein-export protein SecB">
    <location>
        <begin position="1"/>
        <end position="157"/>
    </location>
</feature>
<reference key="1">
    <citation type="submission" date="2008-05" db="EMBL/GenBank/DDBJ databases">
        <title>Complete sequence of Rhodopseudomonas palustris TIE-1.</title>
        <authorList>
            <consortium name="US DOE Joint Genome Institute"/>
            <person name="Lucas S."/>
            <person name="Copeland A."/>
            <person name="Lapidus A."/>
            <person name="Glavina del Rio T."/>
            <person name="Dalin E."/>
            <person name="Tice H."/>
            <person name="Pitluck S."/>
            <person name="Chain P."/>
            <person name="Malfatti S."/>
            <person name="Shin M."/>
            <person name="Vergez L."/>
            <person name="Lang D."/>
            <person name="Schmutz J."/>
            <person name="Larimer F."/>
            <person name="Land M."/>
            <person name="Hauser L."/>
            <person name="Kyrpides N."/>
            <person name="Mikhailova N."/>
            <person name="Emerson D."/>
            <person name="Newman D.K."/>
            <person name="Roden E."/>
            <person name="Richardson P."/>
        </authorList>
    </citation>
    <scope>NUCLEOTIDE SEQUENCE [LARGE SCALE GENOMIC DNA]</scope>
    <source>
        <strain>TIE-1</strain>
    </source>
</reference>
<evidence type="ECO:0000255" key="1">
    <source>
        <dbReference type="HAMAP-Rule" id="MF_00821"/>
    </source>
</evidence>
<proteinExistence type="inferred from homology"/>
<protein>
    <recommendedName>
        <fullName evidence="1">Protein-export protein SecB</fullName>
    </recommendedName>
</protein>
<dbReference type="EMBL" id="CP001096">
    <property type="protein sequence ID" value="ACE98864.1"/>
    <property type="molecule type" value="Genomic_DNA"/>
</dbReference>
<dbReference type="RefSeq" id="WP_011155870.1">
    <property type="nucleotide sequence ID" value="NC_011004.1"/>
</dbReference>
<dbReference type="SMR" id="B3Q8B5"/>
<dbReference type="GeneID" id="66891312"/>
<dbReference type="KEGG" id="rpt:Rpal_0304"/>
<dbReference type="HOGENOM" id="CLU_111574_0_0_5"/>
<dbReference type="OrthoDB" id="9795145at2"/>
<dbReference type="Proteomes" id="UP000001725">
    <property type="component" value="Chromosome"/>
</dbReference>
<dbReference type="GO" id="GO:0005737">
    <property type="term" value="C:cytoplasm"/>
    <property type="evidence" value="ECO:0007669"/>
    <property type="project" value="UniProtKB-SubCell"/>
</dbReference>
<dbReference type="GO" id="GO:0051082">
    <property type="term" value="F:unfolded protein binding"/>
    <property type="evidence" value="ECO:0007669"/>
    <property type="project" value="InterPro"/>
</dbReference>
<dbReference type="GO" id="GO:0006457">
    <property type="term" value="P:protein folding"/>
    <property type="evidence" value="ECO:0007669"/>
    <property type="project" value="UniProtKB-UniRule"/>
</dbReference>
<dbReference type="GO" id="GO:0051262">
    <property type="term" value="P:protein tetramerization"/>
    <property type="evidence" value="ECO:0007669"/>
    <property type="project" value="InterPro"/>
</dbReference>
<dbReference type="GO" id="GO:0015031">
    <property type="term" value="P:protein transport"/>
    <property type="evidence" value="ECO:0007669"/>
    <property type="project" value="UniProtKB-UniRule"/>
</dbReference>
<dbReference type="Gene3D" id="3.10.420.10">
    <property type="entry name" value="SecB-like"/>
    <property type="match status" value="1"/>
</dbReference>
<dbReference type="HAMAP" id="MF_00821">
    <property type="entry name" value="SecB"/>
    <property type="match status" value="1"/>
</dbReference>
<dbReference type="InterPro" id="IPR003708">
    <property type="entry name" value="SecB"/>
</dbReference>
<dbReference type="InterPro" id="IPR035958">
    <property type="entry name" value="SecB-like_sf"/>
</dbReference>
<dbReference type="NCBIfam" id="NF004392">
    <property type="entry name" value="PRK05751.1-3"/>
    <property type="match status" value="1"/>
</dbReference>
<dbReference type="NCBIfam" id="TIGR00809">
    <property type="entry name" value="secB"/>
    <property type="match status" value="1"/>
</dbReference>
<dbReference type="PANTHER" id="PTHR36918">
    <property type="match status" value="1"/>
</dbReference>
<dbReference type="PANTHER" id="PTHR36918:SF1">
    <property type="entry name" value="PROTEIN-EXPORT PROTEIN SECB"/>
    <property type="match status" value="1"/>
</dbReference>
<dbReference type="Pfam" id="PF02556">
    <property type="entry name" value="SecB"/>
    <property type="match status" value="1"/>
</dbReference>
<dbReference type="PRINTS" id="PR01594">
    <property type="entry name" value="SECBCHAPRONE"/>
</dbReference>
<dbReference type="SUPFAM" id="SSF54611">
    <property type="entry name" value="SecB-like"/>
    <property type="match status" value="1"/>
</dbReference>
<accession>B3Q8B5</accession>